<feature type="chain" id="PRO_0000421040" description="Protein TORNADO 1">
    <location>
        <begin position="1"/>
        <end position="1380"/>
    </location>
</feature>
<feature type="transmembrane region" description="Helical" evidence="1">
    <location>
        <begin position="574"/>
        <end position="594"/>
    </location>
</feature>
<feature type="transmembrane region" description="Helical" evidence="1">
    <location>
        <begin position="1255"/>
        <end position="1275"/>
    </location>
</feature>
<feature type="transmembrane region" description="Helical" evidence="1">
    <location>
        <begin position="1287"/>
        <end position="1307"/>
    </location>
</feature>
<feature type="repeat" description="LRR 1">
    <location>
        <begin position="26"/>
        <end position="46"/>
    </location>
</feature>
<feature type="repeat" description="LRR 2">
    <location>
        <begin position="47"/>
        <end position="70"/>
    </location>
</feature>
<feature type="repeat" description="LRR 3">
    <location>
        <begin position="105"/>
        <end position="132"/>
    </location>
</feature>
<feature type="repeat" description="LRR 4">
    <location>
        <begin position="161"/>
        <end position="184"/>
    </location>
</feature>
<feature type="repeat" description="LRR 5">
    <location>
        <begin position="266"/>
        <end position="289"/>
    </location>
</feature>
<feature type="repeat" description="LRR 6">
    <location>
        <begin position="299"/>
        <end position="322"/>
    </location>
</feature>
<feature type="repeat" description="LRR 7">
    <location>
        <begin position="323"/>
        <end position="346"/>
    </location>
</feature>
<feature type="repeat" description="LRR 8">
    <location>
        <begin position="348"/>
        <end position="371"/>
    </location>
</feature>
<feature type="repeat" description="LRR 9">
    <location>
        <begin position="446"/>
        <end position="472"/>
    </location>
</feature>
<feature type="repeat" description="LRR 10">
    <location>
        <begin position="476"/>
        <end position="502"/>
    </location>
</feature>
<feature type="domain" description="Roc">
    <location>
        <begin position="493"/>
        <end position="702"/>
    </location>
</feature>
<feature type="repeat" description="LRR 11">
    <location>
        <begin position="640"/>
        <end position="665"/>
    </location>
</feature>
<feature type="repeat" description="LRR 12">
    <location>
        <begin position="688"/>
        <end position="712"/>
    </location>
</feature>
<feature type="domain" description="COR" evidence="1">
    <location>
        <begin position="757"/>
        <end position="931"/>
    </location>
</feature>
<feature type="repeat" description="LRR 13">
    <location>
        <begin position="799"/>
        <end position="826"/>
    </location>
</feature>
<feature type="repeat" description="LRR 14">
    <location>
        <begin position="1023"/>
        <end position="1046"/>
    </location>
</feature>
<feature type="repeat" description="LRR 15">
    <location>
        <begin position="1131"/>
        <end position="1154"/>
    </location>
</feature>
<feature type="repeat" description="LRR 16">
    <location>
        <begin position="1229"/>
        <end position="1254"/>
    </location>
</feature>
<feature type="binding site">
    <location>
        <begin position="506"/>
        <end position="513"/>
    </location>
    <ligand>
        <name>GTP</name>
        <dbReference type="ChEBI" id="CHEBI:37565"/>
    </ligand>
</feature>
<feature type="binding site">
    <location>
        <begin position="567"/>
        <end position="571"/>
    </location>
    <ligand>
        <name>GTP</name>
        <dbReference type="ChEBI" id="CHEBI:37565"/>
    </ligand>
</feature>
<feature type="binding site">
    <location>
        <begin position="641"/>
        <end position="644"/>
    </location>
    <ligand>
        <name>GTP</name>
        <dbReference type="ChEBI" id="CHEBI:37565"/>
    </ligand>
</feature>
<keyword id="KW-0927">Auxin signaling pathway</keyword>
<keyword id="KW-0217">Developmental protein</keyword>
<keyword id="KW-0342">GTP-binding</keyword>
<keyword id="KW-0378">Hydrolase</keyword>
<keyword id="KW-0433">Leucine-rich repeat</keyword>
<keyword id="KW-0472">Membrane</keyword>
<keyword id="KW-0547">Nucleotide-binding</keyword>
<keyword id="KW-1185">Reference proteome</keyword>
<keyword id="KW-0677">Repeat</keyword>
<keyword id="KW-0812">Transmembrane</keyword>
<keyword id="KW-1133">Transmembrane helix</keyword>
<reference key="1">
    <citation type="journal article" date="1998" name="DNA Res.">
        <title>Structural analysis of Arabidopsis thaliana chromosome 5. VII. Sequence features of the regions of 1,013,767 bp covered by sixteen physically assigned P1 and TAC clones.</title>
        <authorList>
            <person name="Nakamura Y."/>
            <person name="Sato S."/>
            <person name="Asamizu E."/>
            <person name="Kaneko T."/>
            <person name="Kotani H."/>
            <person name="Miyajima N."/>
            <person name="Tabata S."/>
        </authorList>
    </citation>
    <scope>NUCLEOTIDE SEQUENCE [LARGE SCALE GENOMIC DNA]</scope>
    <source>
        <strain>cv. Columbia</strain>
    </source>
</reference>
<reference key="2">
    <citation type="journal article" date="2017" name="Plant J.">
        <title>Araport11: a complete reannotation of the Arabidopsis thaliana reference genome.</title>
        <authorList>
            <person name="Cheng C.Y."/>
            <person name="Krishnakumar V."/>
            <person name="Chan A.P."/>
            <person name="Thibaud-Nissen F."/>
            <person name="Schobel S."/>
            <person name="Town C.D."/>
        </authorList>
    </citation>
    <scope>GENOME REANNOTATION</scope>
    <source>
        <strain>cv. Columbia</strain>
    </source>
</reference>
<reference key="3">
    <citation type="journal article" date="1996" name="Development">
        <title>LOP1: a gene involved in auxin transport and vascular patterning in Arabidopsis.</title>
        <authorList>
            <person name="Carland F.M."/>
            <person name="McHale N.A."/>
        </authorList>
    </citation>
    <scope>FUNCTION</scope>
    <scope>DISRUPTION PHENOTYPE</scope>
    <source>
        <strain>cv. Landsberg erecta</strain>
    </source>
</reference>
<reference key="4">
    <citation type="journal article" date="1996" name="Mol. Gen. Genet.">
        <title>Chromosome landing at the Arabidopsis TORNADO1 locus using an AFLP-based strategy.</title>
        <authorList>
            <person name="Cnops G."/>
            <person name="den Boer B."/>
            <person name="Gerats A."/>
            <person name="Van Montagu M."/>
            <person name="Van Lijsebettens M."/>
        </authorList>
    </citation>
    <scope>FUNCTION</scope>
    <scope>DISRUPTION PHENOTYPE</scope>
    <source>
        <strain>cv. C24</strain>
    </source>
</reference>
<reference key="5">
    <citation type="journal article" date="2000" name="Development">
        <title>Tornado1 and tornado2 are required for the specification of radial and circumferential pattern in the Arabidopsis root.</title>
        <authorList>
            <person name="Cnops G."/>
            <person name="Wang X."/>
            <person name="Linstead P."/>
            <person name="Van Montagu M."/>
            <person name="Van Lijsebettens M."/>
            <person name="Dolan L."/>
        </authorList>
    </citation>
    <scope>FUNCTION</scope>
    <scope>DISRUPTION PHENOTYPE</scope>
    <source>
        <strain>cv. C24</strain>
    </source>
</reference>
<reference key="6">
    <citation type="journal article" date="2006" name="Plant Cell">
        <title>The TORNADO1 and TORNADO2 genes function in several patterning processes during early leaf development in Arabidopsis thaliana.</title>
        <authorList>
            <person name="Cnops G."/>
            <person name="Neyt P."/>
            <person name="Raes J."/>
            <person name="Petrarulo M."/>
            <person name="Nelissen H."/>
            <person name="Malenica N."/>
            <person name="Luschnig C."/>
            <person name="Tietz O."/>
            <person name="Ditengou F."/>
            <person name="Palme K."/>
            <person name="Azmi A."/>
            <person name="Prinsen E."/>
            <person name="Van Lijsebettens M."/>
        </authorList>
    </citation>
    <scope>FUNCTION</scope>
    <scope>DISRUPTION PHENOTYPE</scope>
    <scope>TISSUE SPECIFICITY</scope>
    <scope>DEVELOPMENTAL STAGE</scope>
</reference>
<reference key="7">
    <citation type="journal article" date="2011" name="Curr. Biol.">
        <title>Arabidopsis WIH1 and WIH2 genes act in the transition from somatic to reproductive cell fate.</title>
        <authorList>
            <person name="Lieber D."/>
            <person name="Lora J."/>
            <person name="Schrempp S."/>
            <person name="Lenhard M."/>
            <person name="Laux T."/>
        </authorList>
    </citation>
    <scope>TISSUE SPECIFICITY</scope>
</reference>
<organism>
    <name type="scientific">Arabidopsis thaliana</name>
    <name type="common">Mouse-ear cress</name>
    <dbReference type="NCBI Taxonomy" id="3702"/>
    <lineage>
        <taxon>Eukaryota</taxon>
        <taxon>Viridiplantae</taxon>
        <taxon>Streptophyta</taxon>
        <taxon>Embryophyta</taxon>
        <taxon>Tracheophyta</taxon>
        <taxon>Spermatophyta</taxon>
        <taxon>Magnoliopsida</taxon>
        <taxon>eudicotyledons</taxon>
        <taxon>Gunneridae</taxon>
        <taxon>Pentapetalae</taxon>
        <taxon>rosids</taxon>
        <taxon>malvids</taxon>
        <taxon>Brassicales</taxon>
        <taxon>Brassicaceae</taxon>
        <taxon>Camelineae</taxon>
        <taxon>Arabidopsis</taxon>
    </lineage>
</organism>
<proteinExistence type="evidence at transcript level"/>
<gene>
    <name type="primary">TRN1</name>
    <name type="synonym">LOP1</name>
    <name type="ordered locus">At5g55540</name>
    <name type="ORF">MTE17.26</name>
</gene>
<comment type="function">
    <text evidence="2 3 5 6">Involved in the basipetal transport of auxin (IAA) that modulates growth and organs organization. Required for initial divisions in the epidermal/lateral root cap leading to the formation of epidermal cells and a clone of lateral root cap cells, as well as for the maintenance of the radial pattern of cell specification in the root, thus regulating the distinction between the lateral root cap and epidermis.</text>
</comment>
<comment type="subcellular location">
    <subcellularLocation>
        <location evidence="7">Membrane</location>
        <topology evidence="7">Multi-pass membrane protein</topology>
    </subcellularLocation>
</comment>
<comment type="tissue specificity">
    <text evidence="3 4">Expressed in seedlings, roots, leaves, stems and flowers. Present in ovules, prominently in nucellus and integuments.</text>
</comment>
<comment type="developmental stage">
    <text evidence="3">Strongly expressed in the shoot apical meristem (SAM) and the young leaf primordia. Also detected in the lamina of the cotyledons, especially in the mesophyll and vascular bundles.</text>
</comment>
<comment type="disruption phenotype">
    <text evidence="2 3 5 6">Severe dwarfism combined with twisted and malformed organs, and sterility. Loss of initial meristematic divisions in the epidermal/lateral root cap. Defection in basipetal transport of auxin (IAA) leading to several development aberrations.</text>
</comment>
<name>TRN1_ARATH</name>
<dbReference type="EMBL" id="AB015479">
    <property type="protein sequence ID" value="BAB08571.1"/>
    <property type="molecule type" value="Genomic_DNA"/>
</dbReference>
<dbReference type="EMBL" id="CP002688">
    <property type="protein sequence ID" value="AED96644.1"/>
    <property type="molecule type" value="Genomic_DNA"/>
</dbReference>
<dbReference type="RefSeq" id="NP_200365.1">
    <property type="nucleotide sequence ID" value="NM_124936.3"/>
</dbReference>
<dbReference type="SMR" id="Q9FJ57"/>
<dbReference type="FunCoup" id="Q9FJ57">
    <property type="interactions" value="1466"/>
</dbReference>
<dbReference type="STRING" id="3702.Q9FJ57"/>
<dbReference type="PaxDb" id="3702-AT5G55540.1"/>
<dbReference type="ProteomicsDB" id="232374"/>
<dbReference type="EnsemblPlants" id="AT5G55540.1">
    <property type="protein sequence ID" value="AT5G55540.1"/>
    <property type="gene ID" value="AT5G55540"/>
</dbReference>
<dbReference type="GeneID" id="835648"/>
<dbReference type="Gramene" id="AT5G55540.1">
    <property type="protein sequence ID" value="AT5G55540.1"/>
    <property type="gene ID" value="AT5G55540"/>
</dbReference>
<dbReference type="KEGG" id="ath:AT5G55540"/>
<dbReference type="Araport" id="AT5G55540"/>
<dbReference type="TAIR" id="AT5G55540">
    <property type="gene designation" value="TRN1"/>
</dbReference>
<dbReference type="eggNOG" id="KOG4308">
    <property type="taxonomic scope" value="Eukaryota"/>
</dbReference>
<dbReference type="HOGENOM" id="CLU_255815_0_0_1"/>
<dbReference type="InParanoid" id="Q9FJ57"/>
<dbReference type="OMA" id="MGCEIMQ"/>
<dbReference type="PhylomeDB" id="Q9FJ57"/>
<dbReference type="PRO" id="PR:Q9FJ57"/>
<dbReference type="Proteomes" id="UP000006548">
    <property type="component" value="Chromosome 5"/>
</dbReference>
<dbReference type="ExpressionAtlas" id="Q9FJ57">
    <property type="expression patterns" value="baseline and differential"/>
</dbReference>
<dbReference type="GO" id="GO:0016020">
    <property type="term" value="C:membrane"/>
    <property type="evidence" value="ECO:0007669"/>
    <property type="project" value="UniProtKB-SubCell"/>
</dbReference>
<dbReference type="GO" id="GO:0005525">
    <property type="term" value="F:GTP binding"/>
    <property type="evidence" value="ECO:0007669"/>
    <property type="project" value="UniProtKB-KW"/>
</dbReference>
<dbReference type="GO" id="GO:0016787">
    <property type="term" value="F:hydrolase activity"/>
    <property type="evidence" value="ECO:0007669"/>
    <property type="project" value="UniProtKB-KW"/>
</dbReference>
<dbReference type="GO" id="GO:0009926">
    <property type="term" value="P:auxin polar transport"/>
    <property type="evidence" value="ECO:0000314"/>
    <property type="project" value="TAIR"/>
</dbReference>
<dbReference type="GO" id="GO:0009734">
    <property type="term" value="P:auxin-activated signaling pathway"/>
    <property type="evidence" value="ECO:0007669"/>
    <property type="project" value="UniProtKB-KW"/>
</dbReference>
<dbReference type="GO" id="GO:0010540">
    <property type="term" value="P:basipetal auxin transport"/>
    <property type="evidence" value="ECO:0000315"/>
    <property type="project" value="UniProtKB"/>
</dbReference>
<dbReference type="GO" id="GO:0009965">
    <property type="term" value="P:leaf morphogenesis"/>
    <property type="evidence" value="ECO:0000315"/>
    <property type="project" value="TAIR"/>
</dbReference>
<dbReference type="GO" id="GO:0010305">
    <property type="term" value="P:leaf vascular tissue pattern formation"/>
    <property type="evidence" value="ECO:0000315"/>
    <property type="project" value="TAIR"/>
</dbReference>
<dbReference type="GO" id="GO:0009933">
    <property type="term" value="P:meristem structural organization"/>
    <property type="evidence" value="ECO:0000315"/>
    <property type="project" value="TAIR"/>
</dbReference>
<dbReference type="GO" id="GO:0009825">
    <property type="term" value="P:multidimensional cell growth"/>
    <property type="evidence" value="ECO:0000315"/>
    <property type="project" value="TAIR"/>
</dbReference>
<dbReference type="GO" id="GO:0009956">
    <property type="term" value="P:radial pattern formation"/>
    <property type="evidence" value="ECO:0000315"/>
    <property type="project" value="TAIR"/>
</dbReference>
<dbReference type="FunFam" id="3.40.50.300:FF:004573">
    <property type="entry name" value="Tornado 1"/>
    <property type="match status" value="1"/>
</dbReference>
<dbReference type="Gene3D" id="3.40.50.300">
    <property type="entry name" value="P-loop containing nucleotide triphosphate hydrolases"/>
    <property type="match status" value="1"/>
</dbReference>
<dbReference type="Gene3D" id="3.80.10.10">
    <property type="entry name" value="Ribonuclease Inhibitor"/>
    <property type="match status" value="3"/>
</dbReference>
<dbReference type="InterPro" id="IPR032171">
    <property type="entry name" value="COR-A"/>
</dbReference>
<dbReference type="InterPro" id="IPR001611">
    <property type="entry name" value="Leu-rich_rpt"/>
</dbReference>
<dbReference type="InterPro" id="IPR032675">
    <property type="entry name" value="LRR_dom_sf"/>
</dbReference>
<dbReference type="InterPro" id="IPR027417">
    <property type="entry name" value="P-loop_NTPase"/>
</dbReference>
<dbReference type="PANTHER" id="PTHR47679">
    <property type="entry name" value="PROTEIN TORNADO 1"/>
    <property type="match status" value="1"/>
</dbReference>
<dbReference type="PANTHER" id="PTHR47679:SF1">
    <property type="entry name" value="PROTEIN TORNADO 1"/>
    <property type="match status" value="1"/>
</dbReference>
<dbReference type="Pfam" id="PF16095">
    <property type="entry name" value="COR-A"/>
    <property type="match status" value="1"/>
</dbReference>
<dbReference type="Pfam" id="PF25497">
    <property type="entry name" value="COR-B"/>
    <property type="match status" value="1"/>
</dbReference>
<dbReference type="Pfam" id="PF13516">
    <property type="entry name" value="LRR_6"/>
    <property type="match status" value="1"/>
</dbReference>
<dbReference type="SMART" id="SM00368">
    <property type="entry name" value="LRR_RI"/>
    <property type="match status" value="5"/>
</dbReference>
<dbReference type="SUPFAM" id="SSF52540">
    <property type="entry name" value="P-loop containing nucleoside triphosphate hydrolases"/>
    <property type="match status" value="1"/>
</dbReference>
<dbReference type="SUPFAM" id="SSF52047">
    <property type="entry name" value="RNI-like"/>
    <property type="match status" value="2"/>
</dbReference>
<sequence>MESEPDQSFKDLSWFLQAIKDPQQTFFNLQTLSFSSSGNTTHCQLITESSMNINVTRDNLTSLSQIFIELATSLETQTSLRNLEFEGIFWEIELLQSLGLLLDNTSKIKQLAFRKNRFSEQCLNELSEILKRNRFLKEVMFLESSIGYRGATLLGSALQVNDSLEELQIWEDSIGSKGAEELSRMIEMNSSLKLFSIFDSSPFTATPLISAVLGMNREMEVHMWSGDHKRDRSLKLVEFLPESKTLRIYQIDISGSCRVAAALGMNTTVRSLDMTGAKLNSRWAKEFRWVLEQNKTLREVKLSKTGLKDKAVVYIAAGLFKNKSLQSLYVDGNRFGSVGVEDLLCPLSRFSALQLQANITLRSIVFGGSNTKIGRDGLTAVLKMVTTNETVVHLGIHDDASLGPDDFIHIFKSLQKNASLRRFSLQGCKGVRGDRVLEAITETLQINPLIEEIDLARTPLQDSGKADEIYQKLGHNGRKIDEAETDDSLKDMPLTEPKSVRAFLCGQNYAGKTTLCNSILQSSSASGFPYVENVRNLMNPVEQVVKTVGGMKIKTFKDEETKISMWNLAGQHEFFALHDLMFPSPCFFLIVLSLFRKPSNKEPKTPAEVEEELEYWLRFIVSNSRKAIQQCMKPNVTIVLTHSEKINLQSESFQATVGCIQRLRDKFQALVEFYPTVFTVDARSSPSVSKLTHHIRMTSKAILQRVPRVYQLCNDIVQLLSDWRSENSNKPIMRWKAFADLCQFKVPSLRIKSRNENIQIVETRRHAIATCLHQMGEVIYFDDLGFLILDYEWFCGEVLTQLIKLDVRKQSTGERNGFVSRKELEKTLRSSLQSPIPGMTSKVLEHFDACDLVKMMKKVELCYEQDPSSPDSSLLVPSILEEGRGKTQKWQINTHDCVYSGRHLQCDDSSHMFLTAGFFPRLQVHLHNRIMELKNQHGATYSLEKYLIAITIHGINIRVELGGQLGNYIDVLACSSKSLTETLRLIHQLIIPAIQSSCRGVILLEHIIRPQCVQDLTPPRFRQSQFVSLHRLKEALSSVPAETMYDYQHTWDSVLDSGKTVLRAGFDLARNLLSDDDFREVLQRRYHDLHNLAQELQVPTDENPEADNHVPVTNELEKVDPSFGGIAKGVEAVLQRLKIIEQEIRDLKQEIQGLRYYEHRLLIQLHHKVNYLVNYNVQMDERKVPNMFYFIRAENYGRRLITSMVPGMVALRIHMLCEFRREMHVVEDQLGCDVMQIDNQAVKCLAPYMTNFMKLVTFALRIGANWAAGMGHMIPDLSHTIAHLANPAVMTGAAGAAGAIGVAAALGRNRGRDRDIQEQEQRAAQQWLIDYLREQTCSTGRDIAEKFGLWRVRYRDDGSIAWICKRHMITRAHEVIQVPL</sequence>
<accession>Q9FJ57</accession>
<protein>
    <recommendedName>
        <fullName>Protein TORNADO 1</fullName>
    </recommendedName>
    <alternativeName>
        <fullName>Protein LOPPED 1</fullName>
    </alternativeName>
</protein>
<evidence type="ECO:0000255" key="1"/>
<evidence type="ECO:0000269" key="2">
    <source>
    </source>
</evidence>
<evidence type="ECO:0000269" key="3">
    <source>
    </source>
</evidence>
<evidence type="ECO:0000269" key="4">
    <source>
    </source>
</evidence>
<evidence type="ECO:0000269" key="5">
    <source>
    </source>
</evidence>
<evidence type="ECO:0000269" key="6">
    <source>
    </source>
</evidence>
<evidence type="ECO:0000305" key="7"/>